<accession>A5G7R2</accession>
<gene>
    <name evidence="1" type="primary">rpsR</name>
    <name type="ordered locus">Gura_3677</name>
</gene>
<proteinExistence type="inferred from homology"/>
<sequence length="91" mass="10579">MSDERTPQRSSGPRKKRPFQRRKVCRFCADKQVSIDYKDPRTLRYFISERGKIIPRRISGNCAKHQREITEAIKRARNIALLPIAGSHASQ</sequence>
<feature type="chain" id="PRO_1000078702" description="Small ribosomal subunit protein bS18">
    <location>
        <begin position="1"/>
        <end position="91"/>
    </location>
</feature>
<feature type="region of interest" description="Disordered" evidence="2">
    <location>
        <begin position="1"/>
        <end position="21"/>
    </location>
</feature>
<feature type="compositionally biased region" description="Basic residues" evidence="2">
    <location>
        <begin position="12"/>
        <end position="21"/>
    </location>
</feature>
<keyword id="KW-1185">Reference proteome</keyword>
<keyword id="KW-0687">Ribonucleoprotein</keyword>
<keyword id="KW-0689">Ribosomal protein</keyword>
<keyword id="KW-0694">RNA-binding</keyword>
<keyword id="KW-0699">rRNA-binding</keyword>
<organism>
    <name type="scientific">Geotalea uraniireducens (strain Rf4)</name>
    <name type="common">Geobacter uraniireducens</name>
    <dbReference type="NCBI Taxonomy" id="351605"/>
    <lineage>
        <taxon>Bacteria</taxon>
        <taxon>Pseudomonadati</taxon>
        <taxon>Thermodesulfobacteriota</taxon>
        <taxon>Desulfuromonadia</taxon>
        <taxon>Geobacterales</taxon>
        <taxon>Geobacteraceae</taxon>
        <taxon>Geotalea</taxon>
    </lineage>
</organism>
<dbReference type="EMBL" id="CP000698">
    <property type="protein sequence ID" value="ABQ27830.1"/>
    <property type="molecule type" value="Genomic_DNA"/>
</dbReference>
<dbReference type="RefSeq" id="WP_011940483.1">
    <property type="nucleotide sequence ID" value="NC_009483.1"/>
</dbReference>
<dbReference type="SMR" id="A5G7R2"/>
<dbReference type="STRING" id="351605.Gura_3677"/>
<dbReference type="KEGG" id="gur:Gura_3677"/>
<dbReference type="HOGENOM" id="CLU_148710_2_2_7"/>
<dbReference type="OrthoDB" id="9812008at2"/>
<dbReference type="Proteomes" id="UP000006695">
    <property type="component" value="Chromosome"/>
</dbReference>
<dbReference type="GO" id="GO:0022627">
    <property type="term" value="C:cytosolic small ribosomal subunit"/>
    <property type="evidence" value="ECO:0007669"/>
    <property type="project" value="TreeGrafter"/>
</dbReference>
<dbReference type="GO" id="GO:0070181">
    <property type="term" value="F:small ribosomal subunit rRNA binding"/>
    <property type="evidence" value="ECO:0007669"/>
    <property type="project" value="TreeGrafter"/>
</dbReference>
<dbReference type="GO" id="GO:0003735">
    <property type="term" value="F:structural constituent of ribosome"/>
    <property type="evidence" value="ECO:0007669"/>
    <property type="project" value="InterPro"/>
</dbReference>
<dbReference type="GO" id="GO:0006412">
    <property type="term" value="P:translation"/>
    <property type="evidence" value="ECO:0007669"/>
    <property type="project" value="UniProtKB-UniRule"/>
</dbReference>
<dbReference type="FunFam" id="4.10.640.10:FF:000004">
    <property type="entry name" value="30S ribosomal protein S18"/>
    <property type="match status" value="1"/>
</dbReference>
<dbReference type="Gene3D" id="4.10.640.10">
    <property type="entry name" value="Ribosomal protein S18"/>
    <property type="match status" value="1"/>
</dbReference>
<dbReference type="HAMAP" id="MF_00270">
    <property type="entry name" value="Ribosomal_bS18"/>
    <property type="match status" value="1"/>
</dbReference>
<dbReference type="InterPro" id="IPR001648">
    <property type="entry name" value="Ribosomal_bS18"/>
</dbReference>
<dbReference type="InterPro" id="IPR018275">
    <property type="entry name" value="Ribosomal_bS18_CS"/>
</dbReference>
<dbReference type="InterPro" id="IPR036870">
    <property type="entry name" value="Ribosomal_bS18_sf"/>
</dbReference>
<dbReference type="NCBIfam" id="TIGR00165">
    <property type="entry name" value="S18"/>
    <property type="match status" value="1"/>
</dbReference>
<dbReference type="PANTHER" id="PTHR13479">
    <property type="entry name" value="30S RIBOSOMAL PROTEIN S18"/>
    <property type="match status" value="1"/>
</dbReference>
<dbReference type="PANTHER" id="PTHR13479:SF40">
    <property type="entry name" value="SMALL RIBOSOMAL SUBUNIT PROTEIN BS18M"/>
    <property type="match status" value="1"/>
</dbReference>
<dbReference type="Pfam" id="PF01084">
    <property type="entry name" value="Ribosomal_S18"/>
    <property type="match status" value="1"/>
</dbReference>
<dbReference type="PRINTS" id="PR00974">
    <property type="entry name" value="RIBOSOMALS18"/>
</dbReference>
<dbReference type="SUPFAM" id="SSF46911">
    <property type="entry name" value="Ribosomal protein S18"/>
    <property type="match status" value="1"/>
</dbReference>
<dbReference type="PROSITE" id="PS00057">
    <property type="entry name" value="RIBOSOMAL_S18"/>
    <property type="match status" value="1"/>
</dbReference>
<reference key="1">
    <citation type="submission" date="2007-05" db="EMBL/GenBank/DDBJ databases">
        <title>Complete sequence of Geobacter uraniireducens Rf4.</title>
        <authorList>
            <consortium name="US DOE Joint Genome Institute"/>
            <person name="Copeland A."/>
            <person name="Lucas S."/>
            <person name="Lapidus A."/>
            <person name="Barry K."/>
            <person name="Detter J.C."/>
            <person name="Glavina del Rio T."/>
            <person name="Hammon N."/>
            <person name="Israni S."/>
            <person name="Dalin E."/>
            <person name="Tice H."/>
            <person name="Pitluck S."/>
            <person name="Chertkov O."/>
            <person name="Brettin T."/>
            <person name="Bruce D."/>
            <person name="Han C."/>
            <person name="Schmutz J."/>
            <person name="Larimer F."/>
            <person name="Land M."/>
            <person name="Hauser L."/>
            <person name="Kyrpides N."/>
            <person name="Mikhailova N."/>
            <person name="Shelobolina E."/>
            <person name="Aklujkar M."/>
            <person name="Lovley D."/>
            <person name="Richardson P."/>
        </authorList>
    </citation>
    <scope>NUCLEOTIDE SEQUENCE [LARGE SCALE GENOMIC DNA]</scope>
    <source>
        <strain>ATCC BAA-1134 / JCM 13001 / Rf4</strain>
    </source>
</reference>
<evidence type="ECO:0000255" key="1">
    <source>
        <dbReference type="HAMAP-Rule" id="MF_00270"/>
    </source>
</evidence>
<evidence type="ECO:0000256" key="2">
    <source>
        <dbReference type="SAM" id="MobiDB-lite"/>
    </source>
</evidence>
<evidence type="ECO:0000305" key="3"/>
<comment type="function">
    <text evidence="1">Binds as a heterodimer with protein bS6 to the central domain of the 16S rRNA, where it helps stabilize the platform of the 30S subunit.</text>
</comment>
<comment type="subunit">
    <text evidence="1">Part of the 30S ribosomal subunit. Forms a tight heterodimer with protein bS6.</text>
</comment>
<comment type="similarity">
    <text evidence="1">Belongs to the bacterial ribosomal protein bS18 family.</text>
</comment>
<name>RS18_GEOUR</name>
<protein>
    <recommendedName>
        <fullName evidence="1">Small ribosomal subunit protein bS18</fullName>
    </recommendedName>
    <alternativeName>
        <fullName evidence="3">30S ribosomal protein S18</fullName>
    </alternativeName>
</protein>